<organism>
    <name type="scientific">Haloferax volcanii (strain ATCC 29605 / DSM 3757 / JCM 8879 / NBRC 14742 / NCIMB 2012 / VKM B-1768 / DS2)</name>
    <name type="common">Halobacterium volcanii</name>
    <dbReference type="NCBI Taxonomy" id="309800"/>
    <lineage>
        <taxon>Archaea</taxon>
        <taxon>Methanobacteriati</taxon>
        <taxon>Methanobacteriota</taxon>
        <taxon>Stenosarchaea group</taxon>
        <taxon>Halobacteria</taxon>
        <taxon>Halobacteriales</taxon>
        <taxon>Haloferacaceae</taxon>
        <taxon>Haloferax</taxon>
    </lineage>
</organism>
<geneLocation type="plasmid">
    <name>pHV4</name>
</geneLocation>
<feature type="chain" id="PRO_0000432157" description="CRISPR-associated protein Cas7">
    <location>
        <begin position="1"/>
        <end position="340"/>
    </location>
</feature>
<accession>D4GQN6</accession>
<comment type="function">
    <text evidence="1 2">CRISPR (clustered regularly interspaced short palindromic repeat) is an adaptive immune system that provides protection against mobile genetic elements (viruses, transposable elements and conjugative plasmids). CRISPR clusters contain sequences complementary to antecedent mobile elements and target invading nucleic acids. CRISPR clusters are transcribed and processed into CRISPR RNA (crRNA). Plasmid targeted by CRISPR locus P1 transform wild-type cells very poorly (PubMed:22767603). This protein helps process or stabilize pre-crRNA into individual crRNA units, in vivo Cas6 and Cas7 are also required for optimal crRNA processing and/or stability (PubMed:24459147).</text>
</comment>
<comment type="subunit">
    <text evidence="2">Component of the Cascade-like complex (Cascade I-B), composed of Cas5, Cas6, Cas7 and crRNA.</text>
</comment>
<comment type="subcellular location">
    <subcellularLocation>
        <location evidence="2">Cytoplasm</location>
    </subcellularLocation>
</comment>
<comment type="disruption phenotype">
    <text evidence="1">Loss of the 8 Cas genes in this locus (cas1, cas2, cas3, cas4, cas5, cas6, cas7 and cas8b) leads to loss of CRISPR interference against plasmid targeted by this CRISPR locus, i.e. plasmid is not destroyed by CRISPR.</text>
</comment>
<comment type="miscellaneous">
    <text evidence="3 4">There are 3 CRISPR RNA loci in this organism and a single cas gene locus. A CRISPR-Cas type I-B system.</text>
</comment>
<gene>
    <name evidence="4" type="primary">cas7</name>
    <name type="synonym">csh2</name>
    <name type="ordered locus">HVO_A0207</name>
    <name type="ORF">C498_09711</name>
</gene>
<sequence>MTTLNRSELLFVYDAQDCNPNGNPIGDNRPRRDPDTGQGIITDVRLKRYLRDQLQDDGFDIYVKKTEGRSHTRTKLIKDVLGGVDDADDLEDLGDVAEAFLDAATDVRYFGSTLSFEASDKDEDEAFRDALNSSLPNNYQGPVQFLPSKSLNEVEENEEYDSLTSVISTGEGNRQGGFDLDDKRIKYGIFPFWGLVDNNGAESTNLSQADVERLDTLCWRALKNQTTSRSKLGQEPRLYVRVEYEEGNYHVGGLQNLLELGDDSSESLRSVKDVVVDVTELVETLERVADRIDTLHVVGDGRLELDIGDETIRADEFWSHLSEAGHDVHEIDVLNERDLA</sequence>
<name>CAS7_HALVD</name>
<dbReference type="EMBL" id="CP001955">
    <property type="protein sequence ID" value="ADE01855.1"/>
    <property type="molecule type" value="Genomic_DNA"/>
</dbReference>
<dbReference type="EMBL" id="AOHU01000052">
    <property type="protein sequence ID" value="ELY32093.1"/>
    <property type="molecule type" value="Genomic_DNA"/>
</dbReference>
<dbReference type="RefSeq" id="WP_004043127.1">
    <property type="nucleotide sequence ID" value="NC_013966.1"/>
</dbReference>
<dbReference type="SMR" id="D4GQN6"/>
<dbReference type="PaxDb" id="309800-C498_09711"/>
<dbReference type="EnsemblBacteria" id="ADE01855">
    <property type="protein sequence ID" value="ADE01855"/>
    <property type="gene ID" value="HVO_A0207"/>
</dbReference>
<dbReference type="GeneID" id="8923320"/>
<dbReference type="KEGG" id="hvo:HVO_A0207"/>
<dbReference type="PATRIC" id="fig|309800.29.peg.1897"/>
<dbReference type="eggNOG" id="arCOG02757">
    <property type="taxonomic scope" value="Archaea"/>
</dbReference>
<dbReference type="HOGENOM" id="CLU_071770_0_0_2"/>
<dbReference type="OrthoDB" id="42298at2157"/>
<dbReference type="Proteomes" id="UP000008243">
    <property type="component" value="Plasmid pHV4"/>
</dbReference>
<dbReference type="Proteomes" id="UP000011532">
    <property type="component" value="Unassembled WGS sequence"/>
</dbReference>
<dbReference type="GO" id="GO:0005737">
    <property type="term" value="C:cytoplasm"/>
    <property type="evidence" value="ECO:0007669"/>
    <property type="project" value="UniProtKB-SubCell"/>
</dbReference>
<dbReference type="GO" id="GO:0051607">
    <property type="term" value="P:defense response to virus"/>
    <property type="evidence" value="ECO:0007669"/>
    <property type="project" value="UniProtKB-KW"/>
</dbReference>
<dbReference type="GO" id="GO:0043571">
    <property type="term" value="P:maintenance of CRISPR repeat elements"/>
    <property type="evidence" value="ECO:0007669"/>
    <property type="project" value="InterPro"/>
</dbReference>
<dbReference type="InterPro" id="IPR006482">
    <property type="entry name" value="Cas7_Csh2/Csh2"/>
</dbReference>
<dbReference type="InterPro" id="IPR013419">
    <property type="entry name" value="CRISPR-assoc_prot_Cas7/Csh2"/>
</dbReference>
<dbReference type="NCBIfam" id="TIGR02590">
    <property type="entry name" value="cas_Csh2"/>
    <property type="match status" value="1"/>
</dbReference>
<dbReference type="NCBIfam" id="TIGR01595">
    <property type="entry name" value="cas_CT1132"/>
    <property type="match status" value="1"/>
</dbReference>
<dbReference type="Pfam" id="PF05107">
    <property type="entry name" value="Cas_Cas7"/>
    <property type="match status" value="1"/>
</dbReference>
<reference key="1">
    <citation type="journal article" date="2010" name="PLoS ONE">
        <title>The complete genome sequence of Haloferax volcanii DS2, a model archaeon.</title>
        <authorList>
            <person name="Hartman A.L."/>
            <person name="Norais C."/>
            <person name="Badger J.H."/>
            <person name="Delmas S."/>
            <person name="Haldenby S."/>
            <person name="Madupu R."/>
            <person name="Robinson J."/>
            <person name="Khouri H."/>
            <person name="Ren Q."/>
            <person name="Lowe T.M."/>
            <person name="Maupin-Furlow J."/>
            <person name="Pohlschroder M."/>
            <person name="Daniels C."/>
            <person name="Pfeiffer F."/>
            <person name="Allers T."/>
            <person name="Eisen J.A."/>
        </authorList>
    </citation>
    <scope>NUCLEOTIDE SEQUENCE [LARGE SCALE GENOMIC DNA]</scope>
    <source>
        <strain>ATCC 29605 / DSM 3757 / JCM 8879 / NBRC 14742 / NCIMB 2012 / VKM B-1768 / DS2</strain>
    </source>
</reference>
<reference key="2">
    <citation type="journal article" date="2014" name="PLoS Genet.">
        <title>Phylogenetically driven sequencing of extremely halophilic archaea reveals strategies for static and dynamic osmo-response.</title>
        <authorList>
            <person name="Becker E.A."/>
            <person name="Seitzer P.M."/>
            <person name="Tritt A."/>
            <person name="Larsen D."/>
            <person name="Krusor M."/>
            <person name="Yao A.I."/>
            <person name="Wu D."/>
            <person name="Madern D."/>
            <person name="Eisen J.A."/>
            <person name="Darling A.E."/>
            <person name="Facciotti M.T."/>
        </authorList>
    </citation>
    <scope>NUCLEOTIDE SEQUENCE [LARGE SCALE GENOMIC DNA]</scope>
    <source>
        <strain>ATCC 29605 / DSM 3757 / JCM 8879 / NBRC 14742 / NCIMB 2012 / VKM B-1768 / DS2</strain>
    </source>
</reference>
<reference key="3">
    <citation type="journal article" date="2012" name="J. Biol. Chem.">
        <title>An archaeal immune system can detect multiple protospacer adjacent motifs (PAMs) to target invader DNA.</title>
        <authorList>
            <person name="Fischer S."/>
            <person name="Maier L.K."/>
            <person name="Stoll B."/>
            <person name="Brendel J."/>
            <person name="Fischer E."/>
            <person name="Pfeiffer F."/>
            <person name="Dyall-Smith M."/>
            <person name="Marchfelder A."/>
        </authorList>
    </citation>
    <scope>FUNCTION</scope>
    <scope>DISRUPTION PHENOTYPE</scope>
    <source>
        <strain>DS2 / DS70 / H26</strain>
    </source>
</reference>
<reference key="4">
    <citation type="journal article" date="2014" name="J. Biol. Chem.">
        <title>A complex of Cas proteins 5, 6, and 7 is required for the biogenesis and stability of clustered regularly interspaced short palindromic repeats (CRISPR)-derived RNAs (crRNAs) in Haloferax volcanii.</title>
        <authorList>
            <person name="Brendel J."/>
            <person name="Stoll B."/>
            <person name="Lange S.J."/>
            <person name="Sharma K."/>
            <person name="Lenz C."/>
            <person name="Stachler A.E."/>
            <person name="Maier L.K."/>
            <person name="Richter H."/>
            <person name="Nickel L."/>
            <person name="Schmitz R.A."/>
            <person name="Randau L."/>
            <person name="Allers T."/>
            <person name="Urlaub H."/>
            <person name="Backofen R."/>
            <person name="Marchfelder A."/>
        </authorList>
    </citation>
    <scope>FUNCTION</scope>
    <scope>SUBUNIT</scope>
    <scope>SUBCELLULAR LOCATION</scope>
    <source>
        <strain>DS2 / DS70 / H119</strain>
    </source>
</reference>
<protein>
    <recommendedName>
        <fullName evidence="4">CRISPR-associated protein Cas7</fullName>
    </recommendedName>
</protein>
<proteinExistence type="evidence at protein level"/>
<evidence type="ECO:0000269" key="1">
    <source>
    </source>
</evidence>
<evidence type="ECO:0000269" key="2">
    <source>
    </source>
</evidence>
<evidence type="ECO:0000303" key="3">
    <source>
    </source>
</evidence>
<evidence type="ECO:0000303" key="4">
    <source>
    </source>
</evidence>
<keyword id="KW-0051">Antiviral defense</keyword>
<keyword id="KW-0963">Cytoplasm</keyword>
<keyword id="KW-0614">Plasmid</keyword>
<keyword id="KW-1185">Reference proteome</keyword>